<feature type="signal peptide" evidence="1">
    <location>
        <begin position="1"/>
        <end position="20"/>
    </location>
</feature>
<feature type="chain" id="PRO_0000375845" description="Protein RAFTIN 1A">
    <location>
        <begin position="21"/>
        <end position="389"/>
    </location>
</feature>
<feature type="domain" description="BURP" evidence="2">
    <location>
        <begin position="169"/>
        <end position="383"/>
    </location>
</feature>
<feature type="region of interest" description="Disordered" evidence="3">
    <location>
        <begin position="73"/>
        <end position="105"/>
    </location>
</feature>
<feature type="compositionally biased region" description="Basic and acidic residues" evidence="3">
    <location>
        <begin position="73"/>
        <end position="92"/>
    </location>
</feature>
<keyword id="KW-1185">Reference proteome</keyword>
<keyword id="KW-0732">Signal</keyword>
<organism>
    <name type="scientific">Triticum aestivum</name>
    <name type="common">Wheat</name>
    <dbReference type="NCBI Taxonomy" id="4565"/>
    <lineage>
        <taxon>Eukaryota</taxon>
        <taxon>Viridiplantae</taxon>
        <taxon>Streptophyta</taxon>
        <taxon>Embryophyta</taxon>
        <taxon>Tracheophyta</taxon>
        <taxon>Spermatophyta</taxon>
        <taxon>Magnoliopsida</taxon>
        <taxon>Liliopsida</taxon>
        <taxon>Poales</taxon>
        <taxon>Poaceae</taxon>
        <taxon>BOP clade</taxon>
        <taxon>Pooideae</taxon>
        <taxon>Triticodae</taxon>
        <taxon>Triticeae</taxon>
        <taxon>Triticinae</taxon>
        <taxon>Triticum</taxon>
    </lineage>
</organism>
<name>RAF1A_WHEAT</name>
<reference key="1">
    <citation type="journal article" date="2003" name="Proc. Natl. Acad. Sci. U.S.A.">
        <title>The classical Ubisch bodies carry a sporophytically produced structural protein (RAFTIN) that is essential for pollen development.</title>
        <authorList>
            <person name="Wang A."/>
            <person name="Xia Q."/>
            <person name="Xie W."/>
            <person name="Datla R."/>
            <person name="Selvaraj G."/>
        </authorList>
    </citation>
    <scope>NUCLEOTIDE SEQUENCE [GENOMIC DNA / MRNA]</scope>
    <scope>FUNCTION</scope>
    <scope>TISSUE SPECIFICITY</scope>
    <source>
        <strain>cv. AC Karma</strain>
        <tissue>Anther</tissue>
    </source>
</reference>
<dbReference type="EMBL" id="AJ575662">
    <property type="protein sequence ID" value="CAE02612.1"/>
    <property type="molecule type" value="mRNA"/>
</dbReference>
<dbReference type="EMBL" id="AJ575663">
    <property type="protein sequence ID" value="CAE02613.1"/>
    <property type="molecule type" value="Genomic_DNA"/>
</dbReference>
<dbReference type="SMR" id="Q70KG5"/>
<dbReference type="STRING" id="4565.Q70KG5"/>
<dbReference type="EnsemblPlants" id="TraesARI7A03G03857960.1">
    <property type="protein sequence ID" value="TraesARI7A03G03857960.1"/>
    <property type="gene ID" value="TraesARI7A03G03857960"/>
</dbReference>
<dbReference type="EnsemblPlants" id="TraesCAD_scaffold_079958_01G000100.1">
    <property type="protein sequence ID" value="TraesCAD_scaffold_079958_01G000100.1"/>
    <property type="gene ID" value="TraesCAD_scaffold_079958_01G000100"/>
</dbReference>
<dbReference type="EnsemblPlants" id="TraesCLE_scaffold_007575_01G000300.1">
    <property type="protein sequence ID" value="TraesCLE_scaffold_007575_01G000300.1"/>
    <property type="gene ID" value="TraesCLE_scaffold_007575_01G000300"/>
</dbReference>
<dbReference type="EnsemblPlants" id="TraesCS7A02G239800.1">
    <property type="protein sequence ID" value="TraesCS7A02G239800.1"/>
    <property type="gene ID" value="TraesCS7A02G239800"/>
</dbReference>
<dbReference type="EnsemblPlants" id="TraesCS7A03G0550600.2">
    <property type="protein sequence ID" value="TraesCS7A03G0550600.2.CDS"/>
    <property type="gene ID" value="TraesCS7A03G0550600"/>
</dbReference>
<dbReference type="EnsemblPlants" id="TraesJAG7A03G03868430.1">
    <property type="protein sequence ID" value="TraesJAG7A03G03868430.1"/>
    <property type="gene ID" value="TraesJAG7A03G03868430"/>
</dbReference>
<dbReference type="EnsemblPlants" id="TraesJUL7A03G03921850.1">
    <property type="protein sequence ID" value="TraesJUL7A03G03921850.1"/>
    <property type="gene ID" value="TraesJUL7A03G03921850"/>
</dbReference>
<dbReference type="EnsemblPlants" id="TraesKAR7A01G0143180.1">
    <property type="protein sequence ID" value="cds.TraesKAR7A01G0143180.1"/>
    <property type="gene ID" value="TraesKAR7A01G0143180"/>
</dbReference>
<dbReference type="EnsemblPlants" id="TraesLAC7A03G03839280.1">
    <property type="protein sequence ID" value="TraesLAC7A03G03839280.1"/>
    <property type="gene ID" value="TraesLAC7A03G03839280"/>
</dbReference>
<dbReference type="EnsemblPlants" id="TraesLDM7A03G03890980.1">
    <property type="protein sequence ID" value="TraesLDM7A03G03890980.1"/>
    <property type="gene ID" value="TraesLDM7A03G03890980"/>
</dbReference>
<dbReference type="EnsemblPlants" id="TraesMAC7A03G03887490.1">
    <property type="protein sequence ID" value="TraesMAC7A03G03887490.1"/>
    <property type="gene ID" value="TraesMAC7A03G03887490"/>
</dbReference>
<dbReference type="EnsemblPlants" id="TraesNOR7A03G03929380.1">
    <property type="protein sequence ID" value="TraesNOR7A03G03929380.1"/>
    <property type="gene ID" value="TraesNOR7A03G03929380"/>
</dbReference>
<dbReference type="EnsemblPlants" id="TraesPARA_EIv1.0_2280370.1">
    <property type="protein sequence ID" value="TraesPARA_EIv1.0_2280370.1.CDS"/>
    <property type="gene ID" value="TraesPARA_EIv1.0_2280370"/>
</dbReference>
<dbReference type="EnsemblPlants" id="TraesRN7A0100522600.2">
    <property type="protein sequence ID" value="TraesRN7A0100522600.2"/>
    <property type="gene ID" value="TraesRN7A0100522600"/>
</dbReference>
<dbReference type="EnsemblPlants" id="TraesROB_scaffold_014437_01G000200.1">
    <property type="protein sequence ID" value="TraesROB_scaffold_014437_01G000200.1"/>
    <property type="gene ID" value="TraesROB_scaffold_014437_01G000200"/>
</dbReference>
<dbReference type="EnsemblPlants" id="TraesSTA7A03G03881850.1">
    <property type="protein sequence ID" value="TraesSTA7A03G03881850.1"/>
    <property type="gene ID" value="TraesSTA7A03G03881850"/>
</dbReference>
<dbReference type="EnsemblPlants" id="TraesSYM7A03G03837650.1">
    <property type="protein sequence ID" value="TraesSYM7A03G03837650.1"/>
    <property type="gene ID" value="TraesSYM7A03G03837650"/>
</dbReference>
<dbReference type="EnsemblPlants" id="TraesWEE_scaffold_013097_01G000400.1">
    <property type="protein sequence ID" value="TraesWEE_scaffold_013097_01G000400.1"/>
    <property type="gene ID" value="TraesWEE_scaffold_013097_01G000400"/>
</dbReference>
<dbReference type="Gramene" id="TraesARI7A03G03857960.1">
    <property type="protein sequence ID" value="TraesARI7A03G03857960.1"/>
    <property type="gene ID" value="TraesARI7A03G03857960"/>
</dbReference>
<dbReference type="Gramene" id="TraesCAD_scaffold_079958_01G000100.1">
    <property type="protein sequence ID" value="TraesCAD_scaffold_079958_01G000100.1"/>
    <property type="gene ID" value="TraesCAD_scaffold_079958_01G000100"/>
</dbReference>
<dbReference type="Gramene" id="TraesCLE_scaffold_007575_01G000300.1">
    <property type="protein sequence ID" value="TraesCLE_scaffold_007575_01G000300.1"/>
    <property type="gene ID" value="TraesCLE_scaffold_007575_01G000300"/>
</dbReference>
<dbReference type="Gramene" id="TraesCS7A02G239800.1">
    <property type="protein sequence ID" value="TraesCS7A02G239800.1"/>
    <property type="gene ID" value="TraesCS7A02G239800"/>
</dbReference>
<dbReference type="Gramene" id="TraesCS7A03G0550600.2">
    <property type="protein sequence ID" value="TraesCS7A03G0550600.2.CDS"/>
    <property type="gene ID" value="TraesCS7A03G0550600"/>
</dbReference>
<dbReference type="Gramene" id="TraesJAG7A03G03868430.1">
    <property type="protein sequence ID" value="TraesJAG7A03G03868430.1"/>
    <property type="gene ID" value="TraesJAG7A03G03868430"/>
</dbReference>
<dbReference type="Gramene" id="TraesJUL7A03G03921850.1">
    <property type="protein sequence ID" value="TraesJUL7A03G03921850.1"/>
    <property type="gene ID" value="TraesJUL7A03G03921850"/>
</dbReference>
<dbReference type="Gramene" id="TraesKAR7A01G0143180.1">
    <property type="protein sequence ID" value="cds.TraesKAR7A01G0143180.1"/>
    <property type="gene ID" value="TraesKAR7A01G0143180"/>
</dbReference>
<dbReference type="Gramene" id="TraesLAC7A03G03839280.1">
    <property type="protein sequence ID" value="TraesLAC7A03G03839280.1"/>
    <property type="gene ID" value="TraesLAC7A03G03839280"/>
</dbReference>
<dbReference type="Gramene" id="TraesLDM7A03G03890980.1">
    <property type="protein sequence ID" value="TraesLDM7A03G03890980.1"/>
    <property type="gene ID" value="TraesLDM7A03G03890980"/>
</dbReference>
<dbReference type="Gramene" id="TraesMAC7A03G03887490.1">
    <property type="protein sequence ID" value="TraesMAC7A03G03887490.1"/>
    <property type="gene ID" value="TraesMAC7A03G03887490"/>
</dbReference>
<dbReference type="Gramene" id="TraesNOR7A03G03929380.1">
    <property type="protein sequence ID" value="TraesNOR7A03G03929380.1"/>
    <property type="gene ID" value="TraesNOR7A03G03929380"/>
</dbReference>
<dbReference type="Gramene" id="TraesPARA_EIv1.0_2280370.1">
    <property type="protein sequence ID" value="TraesPARA_EIv1.0_2280370.1.CDS"/>
    <property type="gene ID" value="TraesPARA_EIv1.0_2280370"/>
</dbReference>
<dbReference type="Gramene" id="TraesRN7A0100522600.2">
    <property type="protein sequence ID" value="TraesRN7A0100522600.2"/>
    <property type="gene ID" value="TraesRN7A0100522600"/>
</dbReference>
<dbReference type="Gramene" id="TraesROB_scaffold_014437_01G000200.1">
    <property type="protein sequence ID" value="TraesROB_scaffold_014437_01G000200.1"/>
    <property type="gene ID" value="TraesROB_scaffold_014437_01G000200"/>
</dbReference>
<dbReference type="Gramene" id="TraesSTA7A03G03881850.1">
    <property type="protein sequence ID" value="TraesSTA7A03G03881850.1"/>
    <property type="gene ID" value="TraesSTA7A03G03881850"/>
</dbReference>
<dbReference type="Gramene" id="TraesSYM7A03G03837650.1">
    <property type="protein sequence ID" value="TraesSYM7A03G03837650.1"/>
    <property type="gene ID" value="TraesSYM7A03G03837650"/>
</dbReference>
<dbReference type="Gramene" id="TraesWEE_scaffold_013097_01G000400.1">
    <property type="protein sequence ID" value="TraesWEE_scaffold_013097_01G000400.1"/>
    <property type="gene ID" value="TraesWEE_scaffold_013097_01G000400"/>
</dbReference>
<dbReference type="OMA" id="TLRTCEW"/>
<dbReference type="OrthoDB" id="1909293at2759"/>
<dbReference type="Proteomes" id="UP000019116">
    <property type="component" value="Chromosome 7A"/>
</dbReference>
<dbReference type="ExpressionAtlas" id="Q70KG5">
    <property type="expression patterns" value="baseline"/>
</dbReference>
<dbReference type="GO" id="GO:0043668">
    <property type="term" value="C:exine"/>
    <property type="evidence" value="ECO:0000314"/>
    <property type="project" value="UniProtKB"/>
</dbReference>
<dbReference type="GO" id="GO:0070645">
    <property type="term" value="C:Ubisch body"/>
    <property type="evidence" value="ECO:0000314"/>
    <property type="project" value="UniProtKB"/>
</dbReference>
<dbReference type="GO" id="GO:0009555">
    <property type="term" value="P:pollen development"/>
    <property type="evidence" value="ECO:0000318"/>
    <property type="project" value="GO_Central"/>
</dbReference>
<dbReference type="GO" id="GO:0010152">
    <property type="term" value="P:pollen maturation"/>
    <property type="evidence" value="ECO:0000250"/>
    <property type="project" value="UniProtKB"/>
</dbReference>
<dbReference type="InterPro" id="IPR044816">
    <property type="entry name" value="BURP"/>
</dbReference>
<dbReference type="InterPro" id="IPR004873">
    <property type="entry name" value="BURP_dom"/>
</dbReference>
<dbReference type="PANTHER" id="PTHR31236">
    <property type="entry name" value="BURP DOMAIN PROTEIN USPL1-LIKE"/>
    <property type="match status" value="1"/>
</dbReference>
<dbReference type="PANTHER" id="PTHR31236:SF10">
    <property type="entry name" value="BURP DOMAIN-CONTAINING PROTEIN 13"/>
    <property type="match status" value="1"/>
</dbReference>
<dbReference type="Pfam" id="PF03181">
    <property type="entry name" value="BURP"/>
    <property type="match status" value="1"/>
</dbReference>
<dbReference type="SMART" id="SM01045">
    <property type="entry name" value="BURP"/>
    <property type="match status" value="1"/>
</dbReference>
<dbReference type="PROSITE" id="PS51277">
    <property type="entry name" value="BURP"/>
    <property type="match status" value="1"/>
</dbReference>
<comment type="function">
    <text evidence="4">Required for pollen development. Probably synthesized in the tapetum, packaged in Ubisch bodies and transported at appropriate stages to the micropsores.</text>
</comment>
<comment type="tissue specificity">
    <text evidence="4">Specifically expressed in anthers, in the tapetum and microspores (at protein level).</text>
</comment>
<gene>
    <name type="primary">RAFTIN1A</name>
</gene>
<proteinExistence type="evidence at protein level"/>
<protein>
    <recommendedName>
        <fullName>Protein RAFTIN 1A</fullName>
        <shortName>TaRAFTIN1a</shortName>
    </recommendedName>
    <alternativeName>
        <fullName>BURP domain-containing protein 1A</fullName>
    </alternativeName>
</protein>
<evidence type="ECO:0000255" key="1"/>
<evidence type="ECO:0000255" key="2">
    <source>
        <dbReference type="PROSITE-ProRule" id="PRU00604"/>
    </source>
</evidence>
<evidence type="ECO:0000256" key="3">
    <source>
        <dbReference type="SAM" id="MobiDB-lite"/>
    </source>
</evidence>
<evidence type="ECO:0000269" key="4">
    <source>
    </source>
</evidence>
<accession>Q70KG5</accession>
<sequence length="389" mass="41302">MARFLVALLATTLVAVQAGGQLGHAAPATAEVFWRAVLPHSPLPDAVLRLLKQPAAGVELLTEATSFVRDAEDRPPFDYRDYSRSPPDDEPSKSTGAASGARDFDYDDYSGGDKLRGAASGARDFDYDDYSGADKLRGATDEYKAPSSSLAGNGASMARGGKAETTTVFFHEEAVRVGKRLPFRFPPATPAALGFLPRQVADSVPFTTAALPGVLATFGVASDSATVASMEATLRACESPTIAGESKFCATSLEALVERAMEVLGTRDIRPVTSTLPRAGAPLQTYTVRSVRPVEGGPVFVACHDEAYPYTVYRCHTTGPSRAYMVDMEGARGGDAVTIATVCHTDTSLWNPEHVSFKLLGTKPGGTPVCHLMPYGHIIWAKNVNRSPA</sequence>